<accession>Q54JR9</accession>
<organism>
    <name type="scientific">Dictyostelium discoideum</name>
    <name type="common">Social amoeba</name>
    <dbReference type="NCBI Taxonomy" id="44689"/>
    <lineage>
        <taxon>Eukaryota</taxon>
        <taxon>Amoebozoa</taxon>
        <taxon>Evosea</taxon>
        <taxon>Eumycetozoa</taxon>
        <taxon>Dictyostelia</taxon>
        <taxon>Dictyosteliales</taxon>
        <taxon>Dictyosteliaceae</taxon>
        <taxon>Dictyostelium</taxon>
    </lineage>
</organism>
<comment type="function">
    <text evidence="1">May act as a transcriptional activator.</text>
</comment>
<comment type="similarity">
    <text evidence="4">Belongs to the ECD family.</text>
</comment>
<keyword id="KW-0010">Activator</keyword>
<keyword id="KW-1185">Reference proteome</keyword>
<keyword id="KW-0804">Transcription</keyword>
<keyword id="KW-0805">Transcription regulation</keyword>
<feature type="chain" id="PRO_0000356841" description="Protein ecdysoneless homolog">
    <location>
        <begin position="1"/>
        <end position="819"/>
    </location>
</feature>
<feature type="region of interest" description="Disordered" evidence="3">
    <location>
        <begin position="494"/>
        <end position="558"/>
    </location>
</feature>
<feature type="region of interest" description="Disordered" evidence="3">
    <location>
        <begin position="578"/>
        <end position="603"/>
    </location>
</feature>
<feature type="region of interest" description="Disordered" evidence="3">
    <location>
        <begin position="617"/>
        <end position="680"/>
    </location>
</feature>
<feature type="region of interest" description="Disordered" evidence="3">
    <location>
        <begin position="725"/>
        <end position="749"/>
    </location>
</feature>
<feature type="region of interest" description="Disordered" evidence="3">
    <location>
        <begin position="778"/>
        <end position="819"/>
    </location>
</feature>
<feature type="compositionally biased region" description="Low complexity" evidence="3">
    <location>
        <begin position="501"/>
        <end position="514"/>
    </location>
</feature>
<feature type="compositionally biased region" description="Low complexity" evidence="3">
    <location>
        <begin position="524"/>
        <end position="551"/>
    </location>
</feature>
<feature type="compositionally biased region" description="Low complexity" evidence="3">
    <location>
        <begin position="581"/>
        <end position="592"/>
    </location>
</feature>
<feature type="compositionally biased region" description="Acidic residues" evidence="3">
    <location>
        <begin position="624"/>
        <end position="680"/>
    </location>
</feature>
<feature type="compositionally biased region" description="Low complexity" evidence="3">
    <location>
        <begin position="730"/>
        <end position="740"/>
    </location>
</feature>
<feature type="compositionally biased region" description="Basic residues" evidence="3">
    <location>
        <begin position="797"/>
        <end position="819"/>
    </location>
</feature>
<proteinExistence type="inferred from homology"/>
<dbReference type="EMBL" id="AAFI02000104">
    <property type="protein sequence ID" value="EAL63561.1"/>
    <property type="molecule type" value="Genomic_DNA"/>
</dbReference>
<dbReference type="RefSeq" id="XP_637083.1">
    <property type="nucleotide sequence ID" value="XM_631991.1"/>
</dbReference>
<dbReference type="FunCoup" id="Q54JR9">
    <property type="interactions" value="69"/>
</dbReference>
<dbReference type="STRING" id="44689.Q54JR9"/>
<dbReference type="PaxDb" id="44689-DDB0238063"/>
<dbReference type="EnsemblProtists" id="EAL63561">
    <property type="protein sequence ID" value="EAL63561"/>
    <property type="gene ID" value="DDB_G0287829"/>
</dbReference>
<dbReference type="GeneID" id="8626338"/>
<dbReference type="KEGG" id="ddi:DDB_G0287829"/>
<dbReference type="dictyBase" id="DDB_G0287829">
    <property type="gene designation" value="ecd"/>
</dbReference>
<dbReference type="VEuPathDB" id="AmoebaDB:DDB_G0287829"/>
<dbReference type="eggNOG" id="KOG2406">
    <property type="taxonomic scope" value="Eukaryota"/>
</dbReference>
<dbReference type="HOGENOM" id="CLU_318434_0_0_1"/>
<dbReference type="InParanoid" id="Q54JR9"/>
<dbReference type="OMA" id="CRYTGDP"/>
<dbReference type="PRO" id="PR:Q54JR9"/>
<dbReference type="Proteomes" id="UP000002195">
    <property type="component" value="Chromosome 5"/>
</dbReference>
<dbReference type="GO" id="GO:0005634">
    <property type="term" value="C:nucleus"/>
    <property type="evidence" value="ECO:0000318"/>
    <property type="project" value="GO_Central"/>
</dbReference>
<dbReference type="InterPro" id="IPR010770">
    <property type="entry name" value="Ecd"/>
</dbReference>
<dbReference type="PANTHER" id="PTHR13060:SF0">
    <property type="entry name" value="PROTEIN ECDYSONELESS HOMOLOG"/>
    <property type="match status" value="1"/>
</dbReference>
<dbReference type="PANTHER" id="PTHR13060">
    <property type="entry name" value="SGT1 PROTEIN HSGT1 SUPPRESSOR OF GCR2"/>
    <property type="match status" value="1"/>
</dbReference>
<dbReference type="Pfam" id="PF07093">
    <property type="entry name" value="SGT1"/>
    <property type="match status" value="1"/>
</dbReference>
<protein>
    <recommendedName>
        <fullName evidence="2">Protein ecdysoneless homolog</fullName>
    </recommendedName>
</protein>
<sequence>MNKAKNSGAVPQFVDNFEDFYNNGDDILNNKHKEEINFVKYRIFDTHLINYNNNNNNKNNNNNNNNNENTTITNKLNEIKEYLILNYIKDYIWQKEPFNLKIYDHKKKQQQQQQLPIHFYGNTKFEESIDDEWFIVYILLELTKKFQSLIVSIKDNDGEFILIETAQALPKWIKPTNSNNRVYLKNGEIHIIPLPSDPSQLDTIPYKMDTNTALSILSSSSNNIITKVSNEINEILKNRLKRFYNGEYFLKDQNQIKLAAIPIEIGYLLNQYPQLISDITTTFYNRDSDDMKTISTMKRFPMSRERDSFGNSGQLITTNIRFTRCLYAMLKLQQWNSPKNFHPQLPKPSHPTYDSRSLGVKIICGLEMVYNRSKRNSVSSYHRFNDDLNWLNYLKQLKSNNYFNDETIGSKLYKEKLLIAKNQYLKNNINNNNNNNNKEEESIYKLIDQVTNSKSVDEMIKILQESDKSKIESEDDWLNEENPDKFEDLITEFENDRQKQQQKQQQQQQQQQQNKEGKKEVKENNNNNNNNNNNNNNNNNNNNNNNNNNNNDSNLINDFSNQFKSMLSQLSSFDGVEFNEKSGNSKNKTKSSAYGNGGDDNISFDSNKFMDILKGFTDNNKYDDDYDDDDDDDDDMYQDIDNYEDSDDKDDDEDDENDEDDEDDGFEEYEDEDEDDDDEKEFQYVEFLKKSTIKQYMERMDQELNLKIIASSFELESTKLPKEFDDIEKSNNNNNNNINNNDKDVDEDDNENYKVNQKVDLNLNLVKNLLESLTEQQGFAGPASTLLKEMSDNNSKKREKKKTSSKKLIPKKGKVKENK</sequence>
<name>ECD_DICDI</name>
<gene>
    <name type="primary">ecd</name>
    <name type="synonym">sgt1</name>
    <name type="ORF">DDB_G0287829</name>
</gene>
<reference key="1">
    <citation type="journal article" date="2005" name="Nature">
        <title>The genome of the social amoeba Dictyostelium discoideum.</title>
        <authorList>
            <person name="Eichinger L."/>
            <person name="Pachebat J.A."/>
            <person name="Gloeckner G."/>
            <person name="Rajandream M.A."/>
            <person name="Sucgang R."/>
            <person name="Berriman M."/>
            <person name="Song J."/>
            <person name="Olsen R."/>
            <person name="Szafranski K."/>
            <person name="Xu Q."/>
            <person name="Tunggal B."/>
            <person name="Kummerfeld S."/>
            <person name="Madera M."/>
            <person name="Konfortov B.A."/>
            <person name="Rivero F."/>
            <person name="Bankier A.T."/>
            <person name="Lehmann R."/>
            <person name="Hamlin N."/>
            <person name="Davies R."/>
            <person name="Gaudet P."/>
            <person name="Fey P."/>
            <person name="Pilcher K."/>
            <person name="Chen G."/>
            <person name="Saunders D."/>
            <person name="Sodergren E.J."/>
            <person name="Davis P."/>
            <person name="Kerhornou A."/>
            <person name="Nie X."/>
            <person name="Hall N."/>
            <person name="Anjard C."/>
            <person name="Hemphill L."/>
            <person name="Bason N."/>
            <person name="Farbrother P."/>
            <person name="Desany B."/>
            <person name="Just E."/>
            <person name="Morio T."/>
            <person name="Rost R."/>
            <person name="Churcher C.M."/>
            <person name="Cooper J."/>
            <person name="Haydock S."/>
            <person name="van Driessche N."/>
            <person name="Cronin A."/>
            <person name="Goodhead I."/>
            <person name="Muzny D.M."/>
            <person name="Mourier T."/>
            <person name="Pain A."/>
            <person name="Lu M."/>
            <person name="Harper D."/>
            <person name="Lindsay R."/>
            <person name="Hauser H."/>
            <person name="James K.D."/>
            <person name="Quiles M."/>
            <person name="Madan Babu M."/>
            <person name="Saito T."/>
            <person name="Buchrieser C."/>
            <person name="Wardroper A."/>
            <person name="Felder M."/>
            <person name="Thangavelu M."/>
            <person name="Johnson D."/>
            <person name="Knights A."/>
            <person name="Loulseged H."/>
            <person name="Mungall K.L."/>
            <person name="Oliver K."/>
            <person name="Price C."/>
            <person name="Quail M.A."/>
            <person name="Urushihara H."/>
            <person name="Hernandez J."/>
            <person name="Rabbinowitsch E."/>
            <person name="Steffen D."/>
            <person name="Sanders M."/>
            <person name="Ma J."/>
            <person name="Kohara Y."/>
            <person name="Sharp S."/>
            <person name="Simmonds M.N."/>
            <person name="Spiegler S."/>
            <person name="Tivey A."/>
            <person name="Sugano S."/>
            <person name="White B."/>
            <person name="Walker D."/>
            <person name="Woodward J.R."/>
            <person name="Winckler T."/>
            <person name="Tanaka Y."/>
            <person name="Shaulsky G."/>
            <person name="Schleicher M."/>
            <person name="Weinstock G.M."/>
            <person name="Rosenthal A."/>
            <person name="Cox E.C."/>
            <person name="Chisholm R.L."/>
            <person name="Gibbs R.A."/>
            <person name="Loomis W.F."/>
            <person name="Platzer M."/>
            <person name="Kay R.R."/>
            <person name="Williams J.G."/>
            <person name="Dear P.H."/>
            <person name="Noegel A.A."/>
            <person name="Barrell B.G."/>
            <person name="Kuspa A."/>
        </authorList>
    </citation>
    <scope>NUCLEOTIDE SEQUENCE [LARGE SCALE GENOMIC DNA]</scope>
    <source>
        <strain>AX4</strain>
    </source>
</reference>
<evidence type="ECO:0000250" key="1"/>
<evidence type="ECO:0000250" key="2">
    <source>
        <dbReference type="UniProtKB" id="Q9W032"/>
    </source>
</evidence>
<evidence type="ECO:0000256" key="3">
    <source>
        <dbReference type="SAM" id="MobiDB-lite"/>
    </source>
</evidence>
<evidence type="ECO:0000305" key="4"/>